<name>HUTI_PSEA6</name>
<evidence type="ECO:0000255" key="1">
    <source>
        <dbReference type="HAMAP-Rule" id="MF_00372"/>
    </source>
</evidence>
<feature type="chain" id="PRO_0000306484" description="Imidazolonepropionase">
    <location>
        <begin position="1"/>
        <end position="407"/>
    </location>
</feature>
<feature type="binding site" evidence="1">
    <location>
        <position position="75"/>
    </location>
    <ligand>
        <name>Fe(3+)</name>
        <dbReference type="ChEBI" id="CHEBI:29034"/>
    </ligand>
</feature>
<feature type="binding site" evidence="1">
    <location>
        <position position="75"/>
    </location>
    <ligand>
        <name>Zn(2+)</name>
        <dbReference type="ChEBI" id="CHEBI:29105"/>
    </ligand>
</feature>
<feature type="binding site" evidence="1">
    <location>
        <position position="77"/>
    </location>
    <ligand>
        <name>Fe(3+)</name>
        <dbReference type="ChEBI" id="CHEBI:29034"/>
    </ligand>
</feature>
<feature type="binding site" evidence="1">
    <location>
        <position position="77"/>
    </location>
    <ligand>
        <name>Zn(2+)</name>
        <dbReference type="ChEBI" id="CHEBI:29105"/>
    </ligand>
</feature>
<feature type="binding site" evidence="1">
    <location>
        <position position="84"/>
    </location>
    <ligand>
        <name>4-imidazolone-5-propanoate</name>
        <dbReference type="ChEBI" id="CHEBI:77893"/>
    </ligand>
</feature>
<feature type="binding site" evidence="1">
    <location>
        <position position="147"/>
    </location>
    <ligand>
        <name>4-imidazolone-5-propanoate</name>
        <dbReference type="ChEBI" id="CHEBI:77893"/>
    </ligand>
</feature>
<feature type="binding site" evidence="1">
    <location>
        <position position="147"/>
    </location>
    <ligand>
        <name>N-formimidoyl-L-glutamate</name>
        <dbReference type="ChEBI" id="CHEBI:58928"/>
    </ligand>
</feature>
<feature type="binding site" evidence="1">
    <location>
        <position position="180"/>
    </location>
    <ligand>
        <name>4-imidazolone-5-propanoate</name>
        <dbReference type="ChEBI" id="CHEBI:77893"/>
    </ligand>
</feature>
<feature type="binding site" evidence="1">
    <location>
        <position position="245"/>
    </location>
    <ligand>
        <name>Fe(3+)</name>
        <dbReference type="ChEBI" id="CHEBI:29034"/>
    </ligand>
</feature>
<feature type="binding site" evidence="1">
    <location>
        <position position="245"/>
    </location>
    <ligand>
        <name>Zn(2+)</name>
        <dbReference type="ChEBI" id="CHEBI:29105"/>
    </ligand>
</feature>
<feature type="binding site" evidence="1">
    <location>
        <position position="248"/>
    </location>
    <ligand>
        <name>4-imidazolone-5-propanoate</name>
        <dbReference type="ChEBI" id="CHEBI:77893"/>
    </ligand>
</feature>
<feature type="binding site" evidence="1">
    <location>
        <position position="320"/>
    </location>
    <ligand>
        <name>Fe(3+)</name>
        <dbReference type="ChEBI" id="CHEBI:29034"/>
    </ligand>
</feature>
<feature type="binding site" evidence="1">
    <location>
        <position position="320"/>
    </location>
    <ligand>
        <name>Zn(2+)</name>
        <dbReference type="ChEBI" id="CHEBI:29105"/>
    </ligand>
</feature>
<feature type="binding site" evidence="1">
    <location>
        <position position="322"/>
    </location>
    <ligand>
        <name>N-formimidoyl-L-glutamate</name>
        <dbReference type="ChEBI" id="CHEBI:58928"/>
    </ligand>
</feature>
<feature type="binding site" evidence="1">
    <location>
        <position position="324"/>
    </location>
    <ligand>
        <name>N-formimidoyl-L-glutamate</name>
        <dbReference type="ChEBI" id="CHEBI:58928"/>
    </ligand>
</feature>
<feature type="binding site" evidence="1">
    <location>
        <position position="325"/>
    </location>
    <ligand>
        <name>4-imidazolone-5-propanoate</name>
        <dbReference type="ChEBI" id="CHEBI:77893"/>
    </ligand>
</feature>
<accession>Q15X43</accession>
<keyword id="KW-0963">Cytoplasm</keyword>
<keyword id="KW-0369">Histidine metabolism</keyword>
<keyword id="KW-0378">Hydrolase</keyword>
<keyword id="KW-0408">Iron</keyword>
<keyword id="KW-0479">Metal-binding</keyword>
<keyword id="KW-0862">Zinc</keyword>
<proteinExistence type="inferred from homology"/>
<protein>
    <recommendedName>
        <fullName evidence="1">Imidazolonepropionase</fullName>
        <ecNumber evidence="1">3.5.2.7</ecNumber>
    </recommendedName>
    <alternativeName>
        <fullName evidence="1">Imidazolone-5-propionate hydrolase</fullName>
    </alternativeName>
</protein>
<gene>
    <name evidence="1" type="primary">hutI</name>
    <name type="ordered locus">Patl_1019</name>
</gene>
<comment type="function">
    <text evidence="1">Catalyzes the hydrolytic cleavage of the carbon-nitrogen bond in imidazolone-5-propanoate to yield N-formimidoyl-L-glutamate. It is the third step in the universal histidine degradation pathway.</text>
</comment>
<comment type="catalytic activity">
    <reaction evidence="1">
        <text>4-imidazolone-5-propanoate + H2O = N-formimidoyl-L-glutamate</text>
        <dbReference type="Rhea" id="RHEA:23660"/>
        <dbReference type="ChEBI" id="CHEBI:15377"/>
        <dbReference type="ChEBI" id="CHEBI:58928"/>
        <dbReference type="ChEBI" id="CHEBI:77893"/>
        <dbReference type="EC" id="3.5.2.7"/>
    </reaction>
</comment>
<comment type="cofactor">
    <cofactor evidence="1">
        <name>Zn(2+)</name>
        <dbReference type="ChEBI" id="CHEBI:29105"/>
    </cofactor>
    <cofactor evidence="1">
        <name>Fe(3+)</name>
        <dbReference type="ChEBI" id="CHEBI:29034"/>
    </cofactor>
    <text evidence="1">Binds 1 zinc or iron ion per subunit.</text>
</comment>
<comment type="pathway">
    <text evidence="1">Amino-acid degradation; L-histidine degradation into L-glutamate; N-formimidoyl-L-glutamate from L-histidine: step 3/3.</text>
</comment>
<comment type="subcellular location">
    <subcellularLocation>
        <location evidence="1">Cytoplasm</location>
    </subcellularLocation>
</comment>
<comment type="similarity">
    <text evidence="1">Belongs to the metallo-dependent hydrolases superfamily. HutI family.</text>
</comment>
<sequence length="407" mass="44803">MNQNADFCINNVNIATMRSTKQTENDPYGIRENACIFIKNGLIDAIEPAKRRLSSTIKTFDAQRKWLLPGLIDCHTHLVFAGNRALEFEMRQQGMSYAQIAQRGGGIRSTVNATRLASYEGLLNSAIGRAARLVEEGVTTIEIKSGYGLDLATELRMLQVAKDIESYLLVNIQPTYLGAHSVPFEFHEDPDAYVDFVCEHVMPEVIKQGIATSVDVFCESIAFSPVQCEKVFRSAKHYGLNIKAHVEQLSDLKGARLAAKFNALSVDHIEYLPPDDVPAIAKSNTVAVLLPGAFYHLRETQRPPLTALRRHHVPIALASDLNPGSSPVASLLTIMNMGCILFGMTPAEALSGVTRNAAQALGLAQKGQISSGFDADMCLWDIQHPNELSYGINQIRPTRVWVNGKER</sequence>
<reference key="1">
    <citation type="submission" date="2006-06" db="EMBL/GenBank/DDBJ databases">
        <title>Complete sequence of Pseudoalteromonas atlantica T6c.</title>
        <authorList>
            <consortium name="US DOE Joint Genome Institute"/>
            <person name="Copeland A."/>
            <person name="Lucas S."/>
            <person name="Lapidus A."/>
            <person name="Barry K."/>
            <person name="Detter J.C."/>
            <person name="Glavina del Rio T."/>
            <person name="Hammon N."/>
            <person name="Israni S."/>
            <person name="Dalin E."/>
            <person name="Tice H."/>
            <person name="Pitluck S."/>
            <person name="Saunders E."/>
            <person name="Brettin T."/>
            <person name="Bruce D."/>
            <person name="Han C."/>
            <person name="Tapia R."/>
            <person name="Gilna P."/>
            <person name="Schmutz J."/>
            <person name="Larimer F."/>
            <person name="Land M."/>
            <person name="Hauser L."/>
            <person name="Kyrpides N."/>
            <person name="Kim E."/>
            <person name="Karls A.C."/>
            <person name="Bartlett D."/>
            <person name="Higgins B.P."/>
            <person name="Richardson P."/>
        </authorList>
    </citation>
    <scope>NUCLEOTIDE SEQUENCE [LARGE SCALE GENOMIC DNA]</scope>
    <source>
        <strain>T6c / ATCC BAA-1087</strain>
    </source>
</reference>
<organism>
    <name type="scientific">Pseudoalteromonas atlantica (strain T6c / ATCC BAA-1087)</name>
    <dbReference type="NCBI Taxonomy" id="3042615"/>
    <lineage>
        <taxon>Bacteria</taxon>
        <taxon>Pseudomonadati</taxon>
        <taxon>Pseudomonadota</taxon>
        <taxon>Gammaproteobacteria</taxon>
        <taxon>Alteromonadales</taxon>
        <taxon>Alteromonadaceae</taxon>
        <taxon>Paraglaciecola</taxon>
    </lineage>
</organism>
<dbReference type="EC" id="3.5.2.7" evidence="1"/>
<dbReference type="EMBL" id="CP000388">
    <property type="protein sequence ID" value="ABG39545.1"/>
    <property type="molecule type" value="Genomic_DNA"/>
</dbReference>
<dbReference type="RefSeq" id="WP_011573886.1">
    <property type="nucleotide sequence ID" value="NC_008228.1"/>
</dbReference>
<dbReference type="SMR" id="Q15X43"/>
<dbReference type="STRING" id="342610.Patl_1019"/>
<dbReference type="KEGG" id="pat:Patl_1019"/>
<dbReference type="eggNOG" id="COG1228">
    <property type="taxonomic scope" value="Bacteria"/>
</dbReference>
<dbReference type="HOGENOM" id="CLU_041647_0_0_6"/>
<dbReference type="OrthoDB" id="9776455at2"/>
<dbReference type="UniPathway" id="UPA00379">
    <property type="reaction ID" value="UER00551"/>
</dbReference>
<dbReference type="Proteomes" id="UP000001981">
    <property type="component" value="Chromosome"/>
</dbReference>
<dbReference type="GO" id="GO:0005737">
    <property type="term" value="C:cytoplasm"/>
    <property type="evidence" value="ECO:0007669"/>
    <property type="project" value="UniProtKB-SubCell"/>
</dbReference>
<dbReference type="GO" id="GO:0050480">
    <property type="term" value="F:imidazolonepropionase activity"/>
    <property type="evidence" value="ECO:0007669"/>
    <property type="project" value="UniProtKB-UniRule"/>
</dbReference>
<dbReference type="GO" id="GO:0005506">
    <property type="term" value="F:iron ion binding"/>
    <property type="evidence" value="ECO:0007669"/>
    <property type="project" value="UniProtKB-UniRule"/>
</dbReference>
<dbReference type="GO" id="GO:0008270">
    <property type="term" value="F:zinc ion binding"/>
    <property type="evidence" value="ECO:0007669"/>
    <property type="project" value="UniProtKB-UniRule"/>
</dbReference>
<dbReference type="GO" id="GO:0019556">
    <property type="term" value="P:L-histidine catabolic process to glutamate and formamide"/>
    <property type="evidence" value="ECO:0007669"/>
    <property type="project" value="UniProtKB-UniPathway"/>
</dbReference>
<dbReference type="GO" id="GO:0019557">
    <property type="term" value="P:L-histidine catabolic process to glutamate and formate"/>
    <property type="evidence" value="ECO:0007669"/>
    <property type="project" value="UniProtKB-UniPathway"/>
</dbReference>
<dbReference type="FunFam" id="3.20.20.140:FF:000007">
    <property type="entry name" value="Imidazolonepropionase"/>
    <property type="match status" value="1"/>
</dbReference>
<dbReference type="Gene3D" id="3.20.20.140">
    <property type="entry name" value="Metal-dependent hydrolases"/>
    <property type="match status" value="1"/>
</dbReference>
<dbReference type="Gene3D" id="2.30.40.10">
    <property type="entry name" value="Urease, subunit C, domain 1"/>
    <property type="match status" value="1"/>
</dbReference>
<dbReference type="HAMAP" id="MF_00372">
    <property type="entry name" value="HutI"/>
    <property type="match status" value="1"/>
</dbReference>
<dbReference type="InterPro" id="IPR006680">
    <property type="entry name" value="Amidohydro-rel"/>
</dbReference>
<dbReference type="InterPro" id="IPR005920">
    <property type="entry name" value="HutI"/>
</dbReference>
<dbReference type="InterPro" id="IPR011059">
    <property type="entry name" value="Metal-dep_hydrolase_composite"/>
</dbReference>
<dbReference type="InterPro" id="IPR032466">
    <property type="entry name" value="Metal_Hydrolase"/>
</dbReference>
<dbReference type="NCBIfam" id="TIGR01224">
    <property type="entry name" value="hutI"/>
    <property type="match status" value="1"/>
</dbReference>
<dbReference type="PANTHER" id="PTHR42752">
    <property type="entry name" value="IMIDAZOLONEPROPIONASE"/>
    <property type="match status" value="1"/>
</dbReference>
<dbReference type="PANTHER" id="PTHR42752:SF1">
    <property type="entry name" value="IMIDAZOLONEPROPIONASE-RELATED"/>
    <property type="match status" value="1"/>
</dbReference>
<dbReference type="Pfam" id="PF01979">
    <property type="entry name" value="Amidohydro_1"/>
    <property type="match status" value="1"/>
</dbReference>
<dbReference type="SUPFAM" id="SSF51338">
    <property type="entry name" value="Composite domain of metallo-dependent hydrolases"/>
    <property type="match status" value="1"/>
</dbReference>
<dbReference type="SUPFAM" id="SSF51556">
    <property type="entry name" value="Metallo-dependent hydrolases"/>
    <property type="match status" value="1"/>
</dbReference>